<gene>
    <name evidence="1" type="primary">aroC</name>
    <name type="ordered locus">Dde_2726</name>
</gene>
<proteinExistence type="inferred from homology"/>
<comment type="function">
    <text evidence="1">Catalyzes the anti-1,4-elimination of the C-3 phosphate and the C-6 proR hydrogen from 5-enolpyruvylshikimate-3-phosphate (EPSP) to yield chorismate, which is the branch point compound that serves as the starting substrate for the three terminal pathways of aromatic amino acid biosynthesis. This reaction introduces a second double bond into the aromatic ring system.</text>
</comment>
<comment type="catalytic activity">
    <reaction evidence="1">
        <text>5-O-(1-carboxyvinyl)-3-phosphoshikimate = chorismate + phosphate</text>
        <dbReference type="Rhea" id="RHEA:21020"/>
        <dbReference type="ChEBI" id="CHEBI:29748"/>
        <dbReference type="ChEBI" id="CHEBI:43474"/>
        <dbReference type="ChEBI" id="CHEBI:57701"/>
        <dbReference type="EC" id="4.2.3.5"/>
    </reaction>
</comment>
<comment type="cofactor">
    <cofactor evidence="1">
        <name>FMNH2</name>
        <dbReference type="ChEBI" id="CHEBI:57618"/>
    </cofactor>
    <text evidence="1">Reduced FMN (FMNH(2)).</text>
</comment>
<comment type="pathway">
    <text evidence="1">Metabolic intermediate biosynthesis; chorismate biosynthesis; chorismate from D-erythrose 4-phosphate and phosphoenolpyruvate: step 7/7.</text>
</comment>
<comment type="subunit">
    <text evidence="1">Homotetramer.</text>
</comment>
<comment type="similarity">
    <text evidence="1">Belongs to the chorismate synthase family.</text>
</comment>
<dbReference type="EC" id="4.2.3.5" evidence="1"/>
<dbReference type="EMBL" id="CP000112">
    <property type="protein sequence ID" value="ABB39522.1"/>
    <property type="molecule type" value="Genomic_DNA"/>
</dbReference>
<dbReference type="RefSeq" id="WP_011368547.1">
    <property type="nucleotide sequence ID" value="NC_007519.1"/>
</dbReference>
<dbReference type="SMR" id="Q30XS4"/>
<dbReference type="STRING" id="207559.Dde_2726"/>
<dbReference type="KEGG" id="dde:Dde_2726"/>
<dbReference type="eggNOG" id="COG0082">
    <property type="taxonomic scope" value="Bacteria"/>
</dbReference>
<dbReference type="HOGENOM" id="CLU_034547_0_0_7"/>
<dbReference type="UniPathway" id="UPA00053">
    <property type="reaction ID" value="UER00090"/>
</dbReference>
<dbReference type="Proteomes" id="UP000002710">
    <property type="component" value="Chromosome"/>
</dbReference>
<dbReference type="GO" id="GO:0005829">
    <property type="term" value="C:cytosol"/>
    <property type="evidence" value="ECO:0007669"/>
    <property type="project" value="TreeGrafter"/>
</dbReference>
<dbReference type="GO" id="GO:0004107">
    <property type="term" value="F:chorismate synthase activity"/>
    <property type="evidence" value="ECO:0007669"/>
    <property type="project" value="UniProtKB-UniRule"/>
</dbReference>
<dbReference type="GO" id="GO:0010181">
    <property type="term" value="F:FMN binding"/>
    <property type="evidence" value="ECO:0007669"/>
    <property type="project" value="TreeGrafter"/>
</dbReference>
<dbReference type="GO" id="GO:0008652">
    <property type="term" value="P:amino acid biosynthetic process"/>
    <property type="evidence" value="ECO:0007669"/>
    <property type="project" value="UniProtKB-KW"/>
</dbReference>
<dbReference type="GO" id="GO:0009073">
    <property type="term" value="P:aromatic amino acid family biosynthetic process"/>
    <property type="evidence" value="ECO:0007669"/>
    <property type="project" value="UniProtKB-KW"/>
</dbReference>
<dbReference type="GO" id="GO:0009423">
    <property type="term" value="P:chorismate biosynthetic process"/>
    <property type="evidence" value="ECO:0007669"/>
    <property type="project" value="UniProtKB-UniRule"/>
</dbReference>
<dbReference type="CDD" id="cd07304">
    <property type="entry name" value="Chorismate_synthase"/>
    <property type="match status" value="1"/>
</dbReference>
<dbReference type="Gene3D" id="3.60.150.10">
    <property type="entry name" value="Chorismate synthase AroC"/>
    <property type="match status" value="1"/>
</dbReference>
<dbReference type="HAMAP" id="MF_00300">
    <property type="entry name" value="Chorismate_synth"/>
    <property type="match status" value="1"/>
</dbReference>
<dbReference type="InterPro" id="IPR000453">
    <property type="entry name" value="Chorismate_synth"/>
</dbReference>
<dbReference type="InterPro" id="IPR035904">
    <property type="entry name" value="Chorismate_synth_AroC_sf"/>
</dbReference>
<dbReference type="InterPro" id="IPR020541">
    <property type="entry name" value="Chorismate_synthase_CS"/>
</dbReference>
<dbReference type="NCBIfam" id="TIGR00033">
    <property type="entry name" value="aroC"/>
    <property type="match status" value="1"/>
</dbReference>
<dbReference type="NCBIfam" id="NF003793">
    <property type="entry name" value="PRK05382.1"/>
    <property type="match status" value="1"/>
</dbReference>
<dbReference type="PANTHER" id="PTHR21085">
    <property type="entry name" value="CHORISMATE SYNTHASE"/>
    <property type="match status" value="1"/>
</dbReference>
<dbReference type="PANTHER" id="PTHR21085:SF0">
    <property type="entry name" value="CHORISMATE SYNTHASE"/>
    <property type="match status" value="1"/>
</dbReference>
<dbReference type="Pfam" id="PF01264">
    <property type="entry name" value="Chorismate_synt"/>
    <property type="match status" value="1"/>
</dbReference>
<dbReference type="PIRSF" id="PIRSF001456">
    <property type="entry name" value="Chorismate_synth"/>
    <property type="match status" value="1"/>
</dbReference>
<dbReference type="SUPFAM" id="SSF103263">
    <property type="entry name" value="Chorismate synthase, AroC"/>
    <property type="match status" value="1"/>
</dbReference>
<dbReference type="PROSITE" id="PS00787">
    <property type="entry name" value="CHORISMATE_SYNTHASE_1"/>
    <property type="match status" value="1"/>
</dbReference>
<dbReference type="PROSITE" id="PS00788">
    <property type="entry name" value="CHORISMATE_SYNTHASE_2"/>
    <property type="match status" value="1"/>
</dbReference>
<evidence type="ECO:0000255" key="1">
    <source>
        <dbReference type="HAMAP-Rule" id="MF_00300"/>
    </source>
</evidence>
<reference key="1">
    <citation type="journal article" date="2011" name="J. Bacteriol.">
        <title>Complete genome sequence and updated annotation of Desulfovibrio alaskensis G20.</title>
        <authorList>
            <person name="Hauser L.J."/>
            <person name="Land M.L."/>
            <person name="Brown S.D."/>
            <person name="Larimer F."/>
            <person name="Keller K.L."/>
            <person name="Rapp-Giles B.J."/>
            <person name="Price M.N."/>
            <person name="Lin M."/>
            <person name="Bruce D.C."/>
            <person name="Detter J.C."/>
            <person name="Tapia R."/>
            <person name="Han C.S."/>
            <person name="Goodwin L.A."/>
            <person name="Cheng J.F."/>
            <person name="Pitluck S."/>
            <person name="Copeland A."/>
            <person name="Lucas S."/>
            <person name="Nolan M."/>
            <person name="Lapidus A.L."/>
            <person name="Palumbo A.V."/>
            <person name="Wall J.D."/>
        </authorList>
    </citation>
    <scope>NUCLEOTIDE SEQUENCE [LARGE SCALE GENOMIC DNA]</scope>
    <source>
        <strain>ATCC BAA-1058 / DSM 17464 / G20</strain>
    </source>
</reference>
<sequence>MSGSTFGRVFRLTTYGESHGAGLGGVVDGCPAGIALTEAMIQAELDRRRPGQGGPAATARKEPDRVRLLSGVFEGRTTGTPVAFHVENTDQRSRDYGDIMHVYRPGHADVTYDAKYGRRDYRGGGRSSGRETLSRVAGGAVAQALLAECGITVNAFTVELGGVPARPEDPAGAQDRPFFAPEEDIVAQWDALVRNVKGRGDTVGGIVQVEAYGVPAGLGEPVFDRLDARLACALMSVGAVKGVEIGAGFAAARLTGSSNNDAMTARGYAGNNAGGILGGISSGQTVVARAAVKPIPSVAQEQHTVDDSGREVILRVGGRHDISAIPRIVPVLKAMTALTLADMLLMQRRMTAVRA</sequence>
<protein>
    <recommendedName>
        <fullName evidence="1">Chorismate synthase</fullName>
        <shortName evidence="1">CS</shortName>
        <ecNumber evidence="1">4.2.3.5</ecNumber>
    </recommendedName>
    <alternativeName>
        <fullName evidence="1">5-enolpyruvylshikimate-3-phosphate phospholyase</fullName>
    </alternativeName>
</protein>
<feature type="chain" id="PRO_0000322399" description="Chorismate synthase">
    <location>
        <begin position="1"/>
        <end position="355"/>
    </location>
</feature>
<feature type="binding site" evidence="1">
    <location>
        <position position="48"/>
    </location>
    <ligand>
        <name>NADP(+)</name>
        <dbReference type="ChEBI" id="CHEBI:58349"/>
    </ligand>
</feature>
<feature type="binding site" evidence="1">
    <location>
        <begin position="126"/>
        <end position="128"/>
    </location>
    <ligand>
        <name>FMN</name>
        <dbReference type="ChEBI" id="CHEBI:58210"/>
    </ligand>
</feature>
<feature type="binding site" evidence="1">
    <location>
        <position position="278"/>
    </location>
    <ligand>
        <name>FMN</name>
        <dbReference type="ChEBI" id="CHEBI:58210"/>
    </ligand>
</feature>
<feature type="binding site" evidence="1">
    <location>
        <begin position="293"/>
        <end position="297"/>
    </location>
    <ligand>
        <name>FMN</name>
        <dbReference type="ChEBI" id="CHEBI:58210"/>
    </ligand>
</feature>
<feature type="binding site" evidence="1">
    <location>
        <position position="319"/>
    </location>
    <ligand>
        <name>FMN</name>
        <dbReference type="ChEBI" id="CHEBI:58210"/>
    </ligand>
</feature>
<accession>Q30XS4</accession>
<name>AROC_OLEA2</name>
<keyword id="KW-0028">Amino-acid biosynthesis</keyword>
<keyword id="KW-0057">Aromatic amino acid biosynthesis</keyword>
<keyword id="KW-0274">FAD</keyword>
<keyword id="KW-0285">Flavoprotein</keyword>
<keyword id="KW-0288">FMN</keyword>
<keyword id="KW-0456">Lyase</keyword>
<keyword id="KW-0521">NADP</keyword>
<keyword id="KW-1185">Reference proteome</keyword>
<organism>
    <name type="scientific">Oleidesulfovibrio alaskensis (strain ATCC BAA-1058 / DSM 17464 / G20)</name>
    <name type="common">Desulfovibrio alaskensis</name>
    <dbReference type="NCBI Taxonomy" id="207559"/>
    <lineage>
        <taxon>Bacteria</taxon>
        <taxon>Pseudomonadati</taxon>
        <taxon>Thermodesulfobacteriota</taxon>
        <taxon>Desulfovibrionia</taxon>
        <taxon>Desulfovibrionales</taxon>
        <taxon>Desulfovibrionaceae</taxon>
        <taxon>Oleidesulfovibrio</taxon>
    </lineage>
</organism>